<protein>
    <recommendedName>
        <fullName evidence="1">Ribosomal RNA large subunit methyltransferase Cfr</fullName>
        <ecNumber evidence="1">2.1.1.224</ecNumber>
    </recommendedName>
    <alternativeName>
        <fullName evidence="1">23S rRNA (adenine(2503)-C(8))-methyltransferase</fullName>
    </alternativeName>
    <alternativeName>
        <fullName evidence="1">23S rRNA m8A2503 methyltransferase</fullName>
    </alternativeName>
</protein>
<dbReference type="EC" id="2.1.1.224" evidence="1"/>
<dbReference type="EMBL" id="CP000728">
    <property type="protein sequence ID" value="ABS41349.1"/>
    <property type="molecule type" value="Genomic_DNA"/>
</dbReference>
<dbReference type="RefSeq" id="WP_012100648.1">
    <property type="nucleotide sequence ID" value="NC_009699.1"/>
</dbReference>
<dbReference type="SMR" id="A7GH77"/>
<dbReference type="KEGG" id="cbf:CLI_2911"/>
<dbReference type="HOGENOM" id="CLU_029101_0_2_9"/>
<dbReference type="Proteomes" id="UP000002410">
    <property type="component" value="Chromosome"/>
</dbReference>
<dbReference type="GO" id="GO:0005737">
    <property type="term" value="C:cytoplasm"/>
    <property type="evidence" value="ECO:0007669"/>
    <property type="project" value="UniProtKB-SubCell"/>
</dbReference>
<dbReference type="GO" id="GO:0051539">
    <property type="term" value="F:4 iron, 4 sulfur cluster binding"/>
    <property type="evidence" value="ECO:0007669"/>
    <property type="project" value="UniProtKB-UniRule"/>
</dbReference>
<dbReference type="GO" id="GO:0046872">
    <property type="term" value="F:metal ion binding"/>
    <property type="evidence" value="ECO:0007669"/>
    <property type="project" value="UniProtKB-KW"/>
</dbReference>
<dbReference type="GO" id="GO:0016433">
    <property type="term" value="F:rRNA (adenine) methyltransferase activity"/>
    <property type="evidence" value="ECO:0007669"/>
    <property type="project" value="UniProtKB-UniRule"/>
</dbReference>
<dbReference type="GO" id="GO:0019843">
    <property type="term" value="F:rRNA binding"/>
    <property type="evidence" value="ECO:0007669"/>
    <property type="project" value="UniProtKB-UniRule"/>
</dbReference>
<dbReference type="GO" id="GO:0046677">
    <property type="term" value="P:response to antibiotic"/>
    <property type="evidence" value="ECO:0007669"/>
    <property type="project" value="UniProtKB-KW"/>
</dbReference>
<dbReference type="GO" id="GO:0070475">
    <property type="term" value="P:rRNA base methylation"/>
    <property type="evidence" value="ECO:0007669"/>
    <property type="project" value="UniProtKB-UniRule"/>
</dbReference>
<dbReference type="GO" id="GO:0030488">
    <property type="term" value="P:tRNA methylation"/>
    <property type="evidence" value="ECO:0007669"/>
    <property type="project" value="TreeGrafter"/>
</dbReference>
<dbReference type="CDD" id="cd01335">
    <property type="entry name" value="Radical_SAM"/>
    <property type="match status" value="1"/>
</dbReference>
<dbReference type="FunFam" id="3.20.20.70:FF:000014">
    <property type="entry name" value="Probable dual-specificity RNA methyltransferase RlmN"/>
    <property type="match status" value="1"/>
</dbReference>
<dbReference type="Gene3D" id="1.10.150.530">
    <property type="match status" value="1"/>
</dbReference>
<dbReference type="Gene3D" id="3.20.20.70">
    <property type="entry name" value="Aldolase class I"/>
    <property type="match status" value="1"/>
</dbReference>
<dbReference type="HAMAP" id="MF_01873">
    <property type="entry name" value="23SrRNA_methyltr_Cfr"/>
    <property type="match status" value="1"/>
</dbReference>
<dbReference type="InterPro" id="IPR013785">
    <property type="entry name" value="Aldolase_TIM"/>
</dbReference>
<dbReference type="InterPro" id="IPR040072">
    <property type="entry name" value="Methyltransferase_A"/>
</dbReference>
<dbReference type="InterPro" id="IPR022881">
    <property type="entry name" value="rRNA_lsu_MeTfrase_Cfr"/>
</dbReference>
<dbReference type="InterPro" id="IPR004383">
    <property type="entry name" value="rRNA_lsu_MTrfase_RlmN/Cfr"/>
</dbReference>
<dbReference type="InterPro" id="IPR007197">
    <property type="entry name" value="rSAM"/>
</dbReference>
<dbReference type="NCBIfam" id="NF000424">
    <property type="entry name" value="CfrAB"/>
    <property type="match status" value="1"/>
</dbReference>
<dbReference type="NCBIfam" id="NF011024">
    <property type="entry name" value="PRK14453.1"/>
    <property type="match status" value="1"/>
</dbReference>
<dbReference type="NCBIfam" id="TIGR04432">
    <property type="entry name" value="rSAM_Cfr"/>
    <property type="match status" value="1"/>
</dbReference>
<dbReference type="PANTHER" id="PTHR30544">
    <property type="entry name" value="23S RRNA METHYLTRANSFERASE"/>
    <property type="match status" value="1"/>
</dbReference>
<dbReference type="PANTHER" id="PTHR30544:SF5">
    <property type="entry name" value="RADICAL SAM CORE DOMAIN-CONTAINING PROTEIN"/>
    <property type="match status" value="1"/>
</dbReference>
<dbReference type="Pfam" id="PF04055">
    <property type="entry name" value="Radical_SAM"/>
    <property type="match status" value="1"/>
</dbReference>
<dbReference type="PIRSF" id="PIRSF006004">
    <property type="entry name" value="CHP00048"/>
    <property type="match status" value="1"/>
</dbReference>
<dbReference type="SFLD" id="SFLDF00275">
    <property type="entry name" value="adenosine_C2_methyltransferase"/>
    <property type="match status" value="1"/>
</dbReference>
<dbReference type="SFLD" id="SFLDF00296">
    <property type="entry name" value="adenosine_C8_methyltransferase"/>
    <property type="match status" value="1"/>
</dbReference>
<dbReference type="SFLD" id="SFLDG01062">
    <property type="entry name" value="methyltransferase_(Class_A)"/>
    <property type="match status" value="1"/>
</dbReference>
<dbReference type="SUPFAM" id="SSF102114">
    <property type="entry name" value="Radical SAM enzymes"/>
    <property type="match status" value="1"/>
</dbReference>
<dbReference type="PROSITE" id="PS51918">
    <property type="entry name" value="RADICAL_SAM"/>
    <property type="match status" value="1"/>
</dbReference>
<keyword id="KW-0004">4Fe-4S</keyword>
<keyword id="KW-0046">Antibiotic resistance</keyword>
<keyword id="KW-0963">Cytoplasm</keyword>
<keyword id="KW-1015">Disulfide bond</keyword>
<keyword id="KW-0408">Iron</keyword>
<keyword id="KW-0411">Iron-sulfur</keyword>
<keyword id="KW-0479">Metal-binding</keyword>
<keyword id="KW-0489">Methyltransferase</keyword>
<keyword id="KW-0698">rRNA processing</keyword>
<keyword id="KW-0949">S-adenosyl-L-methionine</keyword>
<keyword id="KW-0808">Transferase</keyword>
<accession>A7GH77</accession>
<organism>
    <name type="scientific">Clostridium botulinum (strain Langeland / NCTC 10281 / Type F)</name>
    <dbReference type="NCBI Taxonomy" id="441772"/>
    <lineage>
        <taxon>Bacteria</taxon>
        <taxon>Bacillati</taxon>
        <taxon>Bacillota</taxon>
        <taxon>Clostridia</taxon>
        <taxon>Eubacteriales</taxon>
        <taxon>Clostridiaceae</taxon>
        <taxon>Clostridium</taxon>
    </lineage>
</organism>
<evidence type="ECO:0000255" key="1">
    <source>
        <dbReference type="HAMAP-Rule" id="MF_01873"/>
    </source>
</evidence>
<evidence type="ECO:0000255" key="2">
    <source>
        <dbReference type="PROSITE-ProRule" id="PRU01266"/>
    </source>
</evidence>
<name>CFR_CLOBL</name>
<feature type="chain" id="PRO_0000350119" description="Ribosomal RNA large subunit methyltransferase Cfr">
    <location>
        <begin position="1"/>
        <end position="344"/>
    </location>
</feature>
<feature type="domain" description="Radical SAM core" evidence="2">
    <location>
        <begin position="97"/>
        <end position="330"/>
    </location>
</feature>
<feature type="active site" description="Proton acceptor" evidence="1">
    <location>
        <position position="90"/>
    </location>
</feature>
<feature type="active site" description="S-methylcysteine intermediate" evidence="1">
    <location>
        <position position="335"/>
    </location>
</feature>
<feature type="binding site" evidence="1">
    <location>
        <position position="111"/>
    </location>
    <ligand>
        <name>[4Fe-4S] cluster</name>
        <dbReference type="ChEBI" id="CHEBI:49883"/>
        <note>4Fe-4S-S-AdoMet</note>
    </ligand>
</feature>
<feature type="binding site" evidence="1">
    <location>
        <position position="115"/>
    </location>
    <ligand>
        <name>[4Fe-4S] cluster</name>
        <dbReference type="ChEBI" id="CHEBI:49883"/>
        <note>4Fe-4S-S-AdoMet</note>
    </ligand>
</feature>
<feature type="binding site" evidence="1">
    <location>
        <position position="118"/>
    </location>
    <ligand>
        <name>[4Fe-4S] cluster</name>
        <dbReference type="ChEBI" id="CHEBI:49883"/>
        <note>4Fe-4S-S-AdoMet</note>
    </ligand>
</feature>
<feature type="binding site" evidence="1">
    <location>
        <begin position="157"/>
        <end position="158"/>
    </location>
    <ligand>
        <name>S-adenosyl-L-methionine</name>
        <dbReference type="ChEBI" id="CHEBI:59789"/>
    </ligand>
</feature>
<feature type="binding site" evidence="1">
    <location>
        <position position="188"/>
    </location>
    <ligand>
        <name>S-adenosyl-L-methionine</name>
        <dbReference type="ChEBI" id="CHEBI:59789"/>
    </ligand>
</feature>
<feature type="binding site" evidence="1">
    <location>
        <begin position="211"/>
        <end position="213"/>
    </location>
    <ligand>
        <name>S-adenosyl-L-methionine</name>
        <dbReference type="ChEBI" id="CHEBI:59789"/>
    </ligand>
</feature>
<feature type="binding site" evidence="1">
    <location>
        <position position="292"/>
    </location>
    <ligand>
        <name>S-adenosyl-L-methionine</name>
        <dbReference type="ChEBI" id="CHEBI:59789"/>
    </ligand>
</feature>
<feature type="disulfide bond" description="(transient)" evidence="1">
    <location>
        <begin position="104"/>
        <end position="335"/>
    </location>
</feature>
<gene>
    <name evidence="1" type="primary">cfr</name>
    <name type="ordered locus">CLI_2911</name>
</gene>
<comment type="function">
    <text evidence="1">Specifically methylates position 8 of adenine 2503 in 23S rRNA. Confers resistance to some classes of antibiotics.</text>
</comment>
<comment type="catalytic activity">
    <reaction evidence="1">
        <text>adenosine(2503) in 23S rRNA + 2 reduced [2Fe-2S]-[ferredoxin] + 2 S-adenosyl-L-methionine = 8-methyladenosine(2503) in 23S rRNA + 5'-deoxyadenosine + L-methionine + 2 oxidized [2Fe-2S]-[ferredoxin] + S-adenosyl-L-homocysteine</text>
        <dbReference type="Rhea" id="RHEA:42632"/>
        <dbReference type="Rhea" id="RHEA-COMP:10000"/>
        <dbReference type="Rhea" id="RHEA-COMP:10001"/>
        <dbReference type="Rhea" id="RHEA-COMP:10152"/>
        <dbReference type="Rhea" id="RHEA-COMP:10153"/>
        <dbReference type="ChEBI" id="CHEBI:17319"/>
        <dbReference type="ChEBI" id="CHEBI:33737"/>
        <dbReference type="ChEBI" id="CHEBI:33738"/>
        <dbReference type="ChEBI" id="CHEBI:57844"/>
        <dbReference type="ChEBI" id="CHEBI:57856"/>
        <dbReference type="ChEBI" id="CHEBI:59789"/>
        <dbReference type="ChEBI" id="CHEBI:74411"/>
        <dbReference type="ChEBI" id="CHEBI:74543"/>
        <dbReference type="EC" id="2.1.1.224"/>
    </reaction>
</comment>
<comment type="cofactor">
    <cofactor evidence="1">
        <name>[4Fe-4S] cluster</name>
        <dbReference type="ChEBI" id="CHEBI:49883"/>
    </cofactor>
    <text evidence="1">Binds 1 [4Fe-4S] cluster. The cluster is coordinated with 3 cysteines and an exchangeable S-adenosyl-L-methionine.</text>
</comment>
<comment type="subcellular location">
    <subcellularLocation>
        <location evidence="1">Cytoplasm</location>
    </subcellularLocation>
</comment>
<comment type="miscellaneous">
    <text evidence="1">Reaction proceeds by a ping-pong mechanism involving intermediate methylation of a conserved cysteine residue.</text>
</comment>
<comment type="similarity">
    <text evidence="1">Belongs to the radical SAM superfamily. RlmN family. Cfr subfamily.</text>
</comment>
<reference key="1">
    <citation type="submission" date="2007-06" db="EMBL/GenBank/DDBJ databases">
        <authorList>
            <person name="Brinkac L.M."/>
            <person name="Daugherty S."/>
            <person name="Dodson R.J."/>
            <person name="Madupu R."/>
            <person name="Brown J.L."/>
            <person name="Bruce D."/>
            <person name="Detter C."/>
            <person name="Munk C."/>
            <person name="Smith L.A."/>
            <person name="Smith T.J."/>
            <person name="White O."/>
            <person name="Brettin T.S."/>
        </authorList>
    </citation>
    <scope>NUCLEOTIDE SEQUENCE [LARGE SCALE GENOMIC DNA]</scope>
    <source>
        <strain>Langeland / NCTC 10281 / Type F</strain>
    </source>
</reference>
<proteinExistence type="inferred from homology"/>
<sequence length="344" mass="39067">MKQTKTKYGKMKQIVSNLKLPDYRYEQLTKAIFHQRIDNFDDMHILPKVLRMSLVNEFGKNVSSVIPVFSQDSKQAQKLLFELTDGERIEAVGLKYKQGWESFCISSQCGCGFGCRFCATGSAGFKRNLTADEITDQLLYFYFNDHRLNSISFMGMGEAFANPELFDAVKILTDQNLFGLSQRRITISTIGIIPGIQSLTQKFPQVNLAFSLHSPFESQRSDLMPINKRFPLNQVMKTLDEHIIHTGRRVFIAYIMLEGINDSKEHAEAVVGLLKNRGSWEHLYHIDLIPYNSTDKTTFKFQSSNAIKQFCSTLKKAGISATVRTQFGSEISAACGQLCYENEL</sequence>